<name>PDXH_PROMH</name>
<accession>B4EWL7</accession>
<sequence>MTDLDFIDVADLRREYMKGGLRRHELTEQPLVLFEKWLKQACEARLSDPTAMCVATVDENGQPYQRIVLLKHFDEKGLVFYTNLGSRKASHLEHNQRVSLLFPWYPLERQVCFLGKAEKLSAFEVVKYFHSRPKDSQIAAWASKQSSRISARGVLESKFLELKQKFQHGEVPLPSFWGGYRVTFDSVEFWQGRENRLHDRFIYQKSPEGWSIERLAP</sequence>
<organism>
    <name type="scientific">Proteus mirabilis (strain HI4320)</name>
    <dbReference type="NCBI Taxonomy" id="529507"/>
    <lineage>
        <taxon>Bacteria</taxon>
        <taxon>Pseudomonadati</taxon>
        <taxon>Pseudomonadota</taxon>
        <taxon>Gammaproteobacteria</taxon>
        <taxon>Enterobacterales</taxon>
        <taxon>Morganellaceae</taxon>
        <taxon>Proteus</taxon>
    </lineage>
</organism>
<keyword id="KW-0285">Flavoprotein</keyword>
<keyword id="KW-0288">FMN</keyword>
<keyword id="KW-0560">Oxidoreductase</keyword>
<keyword id="KW-0664">Pyridoxine biosynthesis</keyword>
<keyword id="KW-1185">Reference proteome</keyword>
<evidence type="ECO:0000255" key="1">
    <source>
        <dbReference type="HAMAP-Rule" id="MF_01629"/>
    </source>
</evidence>
<dbReference type="EC" id="1.4.3.5" evidence="1"/>
<dbReference type="EMBL" id="AM942759">
    <property type="protein sequence ID" value="CAR42938.1"/>
    <property type="molecule type" value="Genomic_DNA"/>
</dbReference>
<dbReference type="RefSeq" id="WP_004243118.1">
    <property type="nucleotide sequence ID" value="NC_010554.1"/>
</dbReference>
<dbReference type="SMR" id="B4EWL7"/>
<dbReference type="EnsemblBacteria" id="CAR42938">
    <property type="protein sequence ID" value="CAR42938"/>
    <property type="gene ID" value="PMI1387"/>
</dbReference>
<dbReference type="GeneID" id="6802147"/>
<dbReference type="KEGG" id="pmr:PMI1387"/>
<dbReference type="eggNOG" id="COG0259">
    <property type="taxonomic scope" value="Bacteria"/>
</dbReference>
<dbReference type="HOGENOM" id="CLU_032263_2_2_6"/>
<dbReference type="UniPathway" id="UPA01068">
    <property type="reaction ID" value="UER00304"/>
</dbReference>
<dbReference type="UniPathway" id="UPA01068">
    <property type="reaction ID" value="UER00305"/>
</dbReference>
<dbReference type="Proteomes" id="UP000008319">
    <property type="component" value="Chromosome"/>
</dbReference>
<dbReference type="GO" id="GO:0010181">
    <property type="term" value="F:FMN binding"/>
    <property type="evidence" value="ECO:0007669"/>
    <property type="project" value="UniProtKB-UniRule"/>
</dbReference>
<dbReference type="GO" id="GO:0004733">
    <property type="term" value="F:pyridoxamine phosphate oxidase activity"/>
    <property type="evidence" value="ECO:0007669"/>
    <property type="project" value="UniProtKB-UniRule"/>
</dbReference>
<dbReference type="GO" id="GO:0008615">
    <property type="term" value="P:pyridoxine biosynthetic process"/>
    <property type="evidence" value="ECO:0007669"/>
    <property type="project" value="UniProtKB-KW"/>
</dbReference>
<dbReference type="FunFam" id="2.30.110.10:FF:000001">
    <property type="entry name" value="Pyridoxine/pyridoxamine 5'-phosphate oxidase"/>
    <property type="match status" value="1"/>
</dbReference>
<dbReference type="Gene3D" id="2.30.110.10">
    <property type="entry name" value="Electron Transport, Fmn-binding Protein, Chain A"/>
    <property type="match status" value="1"/>
</dbReference>
<dbReference type="HAMAP" id="MF_01629">
    <property type="entry name" value="PdxH"/>
    <property type="match status" value="1"/>
</dbReference>
<dbReference type="InterPro" id="IPR000659">
    <property type="entry name" value="Pyridox_Oxase"/>
</dbReference>
<dbReference type="InterPro" id="IPR019740">
    <property type="entry name" value="Pyridox_Oxase_CS"/>
</dbReference>
<dbReference type="InterPro" id="IPR011576">
    <property type="entry name" value="Pyridox_Oxase_N"/>
</dbReference>
<dbReference type="InterPro" id="IPR019576">
    <property type="entry name" value="Pyridoxamine_oxidase_dimer_C"/>
</dbReference>
<dbReference type="InterPro" id="IPR012349">
    <property type="entry name" value="Split_barrel_FMN-bd"/>
</dbReference>
<dbReference type="NCBIfam" id="TIGR00558">
    <property type="entry name" value="pdxH"/>
    <property type="match status" value="1"/>
</dbReference>
<dbReference type="NCBIfam" id="NF004231">
    <property type="entry name" value="PRK05679.1"/>
    <property type="match status" value="1"/>
</dbReference>
<dbReference type="PANTHER" id="PTHR10851:SF0">
    <property type="entry name" value="PYRIDOXINE-5'-PHOSPHATE OXIDASE"/>
    <property type="match status" value="1"/>
</dbReference>
<dbReference type="PANTHER" id="PTHR10851">
    <property type="entry name" value="PYRIDOXINE-5-PHOSPHATE OXIDASE"/>
    <property type="match status" value="1"/>
</dbReference>
<dbReference type="Pfam" id="PF10590">
    <property type="entry name" value="PNP_phzG_C"/>
    <property type="match status" value="1"/>
</dbReference>
<dbReference type="Pfam" id="PF01243">
    <property type="entry name" value="PNPOx_N"/>
    <property type="match status" value="1"/>
</dbReference>
<dbReference type="PIRSF" id="PIRSF000190">
    <property type="entry name" value="Pyd_amn-ph_oxd"/>
    <property type="match status" value="1"/>
</dbReference>
<dbReference type="SUPFAM" id="SSF50475">
    <property type="entry name" value="FMN-binding split barrel"/>
    <property type="match status" value="1"/>
</dbReference>
<dbReference type="PROSITE" id="PS01064">
    <property type="entry name" value="PYRIDOX_OXIDASE"/>
    <property type="match status" value="1"/>
</dbReference>
<proteinExistence type="inferred from homology"/>
<feature type="chain" id="PRO_1000186324" description="Pyridoxine/pyridoxamine 5'-phosphate oxidase">
    <location>
        <begin position="1"/>
        <end position="217"/>
    </location>
</feature>
<feature type="binding site" evidence="1">
    <location>
        <begin position="13"/>
        <end position="16"/>
    </location>
    <ligand>
        <name>substrate</name>
    </ligand>
</feature>
<feature type="binding site" evidence="1">
    <location>
        <begin position="66"/>
        <end position="71"/>
    </location>
    <ligand>
        <name>FMN</name>
        <dbReference type="ChEBI" id="CHEBI:58210"/>
    </ligand>
</feature>
<feature type="binding site" evidence="1">
    <location>
        <position position="71"/>
    </location>
    <ligand>
        <name>substrate</name>
    </ligand>
</feature>
<feature type="binding site" evidence="1">
    <location>
        <begin position="81"/>
        <end position="82"/>
    </location>
    <ligand>
        <name>FMN</name>
        <dbReference type="ChEBI" id="CHEBI:58210"/>
    </ligand>
</feature>
<feature type="binding site" evidence="1">
    <location>
        <position position="87"/>
    </location>
    <ligand>
        <name>FMN</name>
        <dbReference type="ChEBI" id="CHEBI:58210"/>
    </ligand>
</feature>
<feature type="binding site" evidence="1">
    <location>
        <position position="88"/>
    </location>
    <ligand>
        <name>FMN</name>
        <dbReference type="ChEBI" id="CHEBI:58210"/>
    </ligand>
</feature>
<feature type="binding site" evidence="1">
    <location>
        <position position="110"/>
    </location>
    <ligand>
        <name>FMN</name>
        <dbReference type="ChEBI" id="CHEBI:58210"/>
    </ligand>
</feature>
<feature type="binding site" evidence="1">
    <location>
        <position position="128"/>
    </location>
    <ligand>
        <name>substrate</name>
    </ligand>
</feature>
<feature type="binding site" evidence="1">
    <location>
        <position position="132"/>
    </location>
    <ligand>
        <name>substrate</name>
    </ligand>
</feature>
<feature type="binding site" evidence="1">
    <location>
        <position position="136"/>
    </location>
    <ligand>
        <name>substrate</name>
    </ligand>
</feature>
<feature type="binding site" evidence="1">
    <location>
        <begin position="145"/>
        <end position="146"/>
    </location>
    <ligand>
        <name>FMN</name>
        <dbReference type="ChEBI" id="CHEBI:58210"/>
    </ligand>
</feature>
<feature type="binding site" evidence="1">
    <location>
        <position position="190"/>
    </location>
    <ligand>
        <name>FMN</name>
        <dbReference type="ChEBI" id="CHEBI:58210"/>
    </ligand>
</feature>
<feature type="binding site" evidence="1">
    <location>
        <begin position="196"/>
        <end position="198"/>
    </location>
    <ligand>
        <name>substrate</name>
    </ligand>
</feature>
<feature type="binding site" evidence="1">
    <location>
        <position position="200"/>
    </location>
    <ligand>
        <name>FMN</name>
        <dbReference type="ChEBI" id="CHEBI:58210"/>
    </ligand>
</feature>
<reference key="1">
    <citation type="journal article" date="2008" name="J. Bacteriol.">
        <title>Complete genome sequence of uropathogenic Proteus mirabilis, a master of both adherence and motility.</title>
        <authorList>
            <person name="Pearson M.M."/>
            <person name="Sebaihia M."/>
            <person name="Churcher C."/>
            <person name="Quail M.A."/>
            <person name="Seshasayee A.S."/>
            <person name="Luscombe N.M."/>
            <person name="Abdellah Z."/>
            <person name="Arrosmith C."/>
            <person name="Atkin B."/>
            <person name="Chillingworth T."/>
            <person name="Hauser H."/>
            <person name="Jagels K."/>
            <person name="Moule S."/>
            <person name="Mungall K."/>
            <person name="Norbertczak H."/>
            <person name="Rabbinowitsch E."/>
            <person name="Walker D."/>
            <person name="Whithead S."/>
            <person name="Thomson N.R."/>
            <person name="Rather P.N."/>
            <person name="Parkhill J."/>
            <person name="Mobley H.L.T."/>
        </authorList>
    </citation>
    <scope>NUCLEOTIDE SEQUENCE [LARGE SCALE GENOMIC DNA]</scope>
    <source>
        <strain>HI4320</strain>
    </source>
</reference>
<gene>
    <name evidence="1" type="primary">pdxH</name>
    <name type="ordered locus">PMI1387</name>
</gene>
<protein>
    <recommendedName>
        <fullName evidence="1">Pyridoxine/pyridoxamine 5'-phosphate oxidase</fullName>
        <ecNumber evidence="1">1.4.3.5</ecNumber>
    </recommendedName>
    <alternativeName>
        <fullName evidence="1">PNP/PMP oxidase</fullName>
        <shortName evidence="1">PNPOx</shortName>
    </alternativeName>
    <alternativeName>
        <fullName evidence="1">Pyridoxal 5'-phosphate synthase</fullName>
    </alternativeName>
</protein>
<comment type="function">
    <text evidence="1">Catalyzes the oxidation of either pyridoxine 5'-phosphate (PNP) or pyridoxamine 5'-phosphate (PMP) into pyridoxal 5'-phosphate (PLP).</text>
</comment>
<comment type="catalytic activity">
    <reaction evidence="1">
        <text>pyridoxamine 5'-phosphate + O2 + H2O = pyridoxal 5'-phosphate + H2O2 + NH4(+)</text>
        <dbReference type="Rhea" id="RHEA:15817"/>
        <dbReference type="ChEBI" id="CHEBI:15377"/>
        <dbReference type="ChEBI" id="CHEBI:15379"/>
        <dbReference type="ChEBI" id="CHEBI:16240"/>
        <dbReference type="ChEBI" id="CHEBI:28938"/>
        <dbReference type="ChEBI" id="CHEBI:58451"/>
        <dbReference type="ChEBI" id="CHEBI:597326"/>
        <dbReference type="EC" id="1.4.3.5"/>
    </reaction>
</comment>
<comment type="catalytic activity">
    <reaction evidence="1">
        <text>pyridoxine 5'-phosphate + O2 = pyridoxal 5'-phosphate + H2O2</text>
        <dbReference type="Rhea" id="RHEA:15149"/>
        <dbReference type="ChEBI" id="CHEBI:15379"/>
        <dbReference type="ChEBI" id="CHEBI:16240"/>
        <dbReference type="ChEBI" id="CHEBI:58589"/>
        <dbReference type="ChEBI" id="CHEBI:597326"/>
        <dbReference type="EC" id="1.4.3.5"/>
    </reaction>
</comment>
<comment type="cofactor">
    <cofactor evidence="1">
        <name>FMN</name>
        <dbReference type="ChEBI" id="CHEBI:58210"/>
    </cofactor>
    <text evidence="1">Binds 1 FMN per subunit.</text>
</comment>
<comment type="pathway">
    <text evidence="1">Cofactor metabolism; pyridoxal 5'-phosphate salvage; pyridoxal 5'-phosphate from pyridoxamine 5'-phosphate: step 1/1.</text>
</comment>
<comment type="pathway">
    <text evidence="1">Cofactor metabolism; pyridoxal 5'-phosphate salvage; pyridoxal 5'-phosphate from pyridoxine 5'-phosphate: step 1/1.</text>
</comment>
<comment type="subunit">
    <text evidence="1">Homodimer.</text>
</comment>
<comment type="similarity">
    <text evidence="1">Belongs to the pyridoxamine 5'-phosphate oxidase family.</text>
</comment>